<reference key="1">
    <citation type="journal article" date="2006" name="Nat. Genet.">
        <title>The multidrug-resistant human pathogen Clostridium difficile has a highly mobile, mosaic genome.</title>
        <authorList>
            <person name="Sebaihia M."/>
            <person name="Wren B.W."/>
            <person name="Mullany P."/>
            <person name="Fairweather N.F."/>
            <person name="Minton N."/>
            <person name="Stabler R."/>
            <person name="Thomson N.R."/>
            <person name="Roberts A.P."/>
            <person name="Cerdeno-Tarraga A.M."/>
            <person name="Wang H."/>
            <person name="Holden M.T.G."/>
            <person name="Wright A."/>
            <person name="Churcher C."/>
            <person name="Quail M.A."/>
            <person name="Baker S."/>
            <person name="Bason N."/>
            <person name="Brooks K."/>
            <person name="Chillingworth T."/>
            <person name="Cronin A."/>
            <person name="Davis P."/>
            <person name="Dowd L."/>
            <person name="Fraser A."/>
            <person name="Feltwell T."/>
            <person name="Hance Z."/>
            <person name="Holroyd S."/>
            <person name="Jagels K."/>
            <person name="Moule S."/>
            <person name="Mungall K."/>
            <person name="Price C."/>
            <person name="Rabbinowitsch E."/>
            <person name="Sharp S."/>
            <person name="Simmonds M."/>
            <person name="Stevens K."/>
            <person name="Unwin L."/>
            <person name="Whithead S."/>
            <person name="Dupuy B."/>
            <person name="Dougan G."/>
            <person name="Barrell B."/>
            <person name="Parkhill J."/>
        </authorList>
    </citation>
    <scope>NUCLEOTIDE SEQUENCE [LARGE SCALE GENOMIC DNA]</scope>
    <source>
        <strain>630</strain>
    </source>
</reference>
<keyword id="KW-0067">ATP-binding</keyword>
<keyword id="KW-0963">Cytoplasm</keyword>
<keyword id="KW-0436">Ligase</keyword>
<keyword id="KW-0547">Nucleotide-binding</keyword>
<keyword id="KW-1185">Reference proteome</keyword>
<keyword id="KW-0819">tRNA processing</keyword>
<dbReference type="EC" id="6.3.4.19" evidence="1"/>
<dbReference type="EMBL" id="AM180355">
    <property type="protein sequence ID" value="CAJ70466.1"/>
    <property type="molecule type" value="Genomic_DNA"/>
</dbReference>
<dbReference type="RefSeq" id="WP_003434952.1">
    <property type="nucleotide sequence ID" value="NZ_JAUPES010000007.1"/>
</dbReference>
<dbReference type="RefSeq" id="YP_001090083.1">
    <property type="nucleotide sequence ID" value="NC_009089.1"/>
</dbReference>
<dbReference type="SMR" id="Q181G3"/>
<dbReference type="STRING" id="272563.CD630_35600"/>
<dbReference type="EnsemblBacteria" id="CAJ70466">
    <property type="protein sequence ID" value="CAJ70466"/>
    <property type="gene ID" value="CD630_35600"/>
</dbReference>
<dbReference type="KEGG" id="cdf:CD630_35600"/>
<dbReference type="KEGG" id="pdc:CDIF630_03880"/>
<dbReference type="PATRIC" id="fig|272563.120.peg.3763"/>
<dbReference type="eggNOG" id="COG0037">
    <property type="taxonomic scope" value="Bacteria"/>
</dbReference>
<dbReference type="OrthoDB" id="9807403at2"/>
<dbReference type="PhylomeDB" id="Q181G3"/>
<dbReference type="BioCyc" id="PDIF272563:G12WB-3746-MONOMER"/>
<dbReference type="Proteomes" id="UP000001978">
    <property type="component" value="Chromosome"/>
</dbReference>
<dbReference type="GO" id="GO:0005737">
    <property type="term" value="C:cytoplasm"/>
    <property type="evidence" value="ECO:0007669"/>
    <property type="project" value="UniProtKB-SubCell"/>
</dbReference>
<dbReference type="GO" id="GO:0005524">
    <property type="term" value="F:ATP binding"/>
    <property type="evidence" value="ECO:0007669"/>
    <property type="project" value="UniProtKB-UniRule"/>
</dbReference>
<dbReference type="GO" id="GO:0032267">
    <property type="term" value="F:tRNA(Ile)-lysidine synthase activity"/>
    <property type="evidence" value="ECO:0007669"/>
    <property type="project" value="UniProtKB-EC"/>
</dbReference>
<dbReference type="GO" id="GO:0006400">
    <property type="term" value="P:tRNA modification"/>
    <property type="evidence" value="ECO:0007669"/>
    <property type="project" value="UniProtKB-UniRule"/>
</dbReference>
<dbReference type="CDD" id="cd01992">
    <property type="entry name" value="TilS_N"/>
    <property type="match status" value="1"/>
</dbReference>
<dbReference type="Gene3D" id="1.20.59.20">
    <property type="match status" value="1"/>
</dbReference>
<dbReference type="Gene3D" id="3.40.50.620">
    <property type="entry name" value="HUPs"/>
    <property type="match status" value="1"/>
</dbReference>
<dbReference type="Gene3D" id="3.50.40.10">
    <property type="entry name" value="Phenylalanyl-trna Synthetase, Chain B, domain 3"/>
    <property type="match status" value="1"/>
</dbReference>
<dbReference type="HAMAP" id="MF_01161">
    <property type="entry name" value="tRNA_Ile_lys_synt"/>
    <property type="match status" value="1"/>
</dbReference>
<dbReference type="InterPro" id="IPR012796">
    <property type="entry name" value="Lysidine-tRNA-synth_C"/>
</dbReference>
<dbReference type="InterPro" id="IPR020825">
    <property type="entry name" value="Phe-tRNA_synthase-like_B3/B4"/>
</dbReference>
<dbReference type="InterPro" id="IPR014729">
    <property type="entry name" value="Rossmann-like_a/b/a_fold"/>
</dbReference>
<dbReference type="InterPro" id="IPR011063">
    <property type="entry name" value="TilS/TtcA_N"/>
</dbReference>
<dbReference type="InterPro" id="IPR012094">
    <property type="entry name" value="tRNA_Ile_lys_synt"/>
</dbReference>
<dbReference type="InterPro" id="IPR012795">
    <property type="entry name" value="tRNA_Ile_lys_synt_N"/>
</dbReference>
<dbReference type="NCBIfam" id="TIGR02433">
    <property type="entry name" value="lysidine_TilS_C"/>
    <property type="match status" value="1"/>
</dbReference>
<dbReference type="NCBIfam" id="TIGR02432">
    <property type="entry name" value="lysidine_TilS_N"/>
    <property type="match status" value="1"/>
</dbReference>
<dbReference type="PANTHER" id="PTHR43033">
    <property type="entry name" value="TRNA(ILE)-LYSIDINE SYNTHASE-RELATED"/>
    <property type="match status" value="1"/>
</dbReference>
<dbReference type="PANTHER" id="PTHR43033:SF1">
    <property type="entry name" value="TRNA(ILE)-LYSIDINE SYNTHASE-RELATED"/>
    <property type="match status" value="1"/>
</dbReference>
<dbReference type="Pfam" id="PF01171">
    <property type="entry name" value="ATP_bind_3"/>
    <property type="match status" value="1"/>
</dbReference>
<dbReference type="Pfam" id="PF11734">
    <property type="entry name" value="TilS_C"/>
    <property type="match status" value="1"/>
</dbReference>
<dbReference type="SMART" id="SM00977">
    <property type="entry name" value="TilS_C"/>
    <property type="match status" value="1"/>
</dbReference>
<dbReference type="SUPFAM" id="SSF52402">
    <property type="entry name" value="Adenine nucleotide alpha hydrolases-like"/>
    <property type="match status" value="1"/>
</dbReference>
<dbReference type="SUPFAM" id="SSF82829">
    <property type="entry name" value="MesJ substrate recognition domain-like"/>
    <property type="match status" value="1"/>
</dbReference>
<dbReference type="SUPFAM" id="SSF56037">
    <property type="entry name" value="PheT/TilS domain"/>
    <property type="match status" value="1"/>
</dbReference>
<protein>
    <recommendedName>
        <fullName evidence="1">tRNA(Ile)-lysidine synthase</fullName>
        <ecNumber evidence="1">6.3.4.19</ecNumber>
    </recommendedName>
    <alternativeName>
        <fullName evidence="1">tRNA(Ile)-2-lysyl-cytidine synthase</fullName>
    </alternativeName>
    <alternativeName>
        <fullName evidence="1">tRNA(Ile)-lysidine synthetase</fullName>
    </alternativeName>
</protein>
<accession>Q181G3</accession>
<sequence length="462" mass="53595">MIFDKVLSTINKHNLIQKGDKIVLGLSGGPDSVCLLHVLNRLKKDFNIEIYAAHLNHQIRGIEAQKDALYVSKLCEDMGIIFFVKSINVPKYCENEGLSLEEGARKLRYEMFYEIKDKIKANKIAIGHNLNDQAETVMMRIMRGTGLKGLKGIDYIRDNCIIRPILDVERNEIEEYCEAYNLNPRIDKTNLENIYTRNKIRLDLLPYMKDNFNSNVIESIVRMSNSLKSDNDYIEKEAEAKFREVSNIKEKGFVEINLDDFVCLHDAIKVRVLRNSIKHILGDTNFVDQRHIEDIMSLEDNSKVNKMLTLPRNIFVYRKKDSIILTNEEIVNEEIEFYYNVPSNGFIKIKELKQIIETQVMSIDRYKSMKLDNSSKGFDFNKVKGGIVIRSRRQGDKIKLAMGSKKVKDLFIDLKIPREERCKIPIITDSEGIICVGDYKISENYKIDENTKEVLKINFNKL</sequence>
<comment type="function">
    <text evidence="1">Ligates lysine onto the cytidine present at position 34 of the AUA codon-specific tRNA(Ile) that contains the anticodon CAU, in an ATP-dependent manner. Cytidine is converted to lysidine, thus changing the amino acid specificity of the tRNA from methionine to isoleucine.</text>
</comment>
<comment type="catalytic activity">
    <reaction evidence="1">
        <text>cytidine(34) in tRNA(Ile2) + L-lysine + ATP = lysidine(34) in tRNA(Ile2) + AMP + diphosphate + H(+)</text>
        <dbReference type="Rhea" id="RHEA:43744"/>
        <dbReference type="Rhea" id="RHEA-COMP:10625"/>
        <dbReference type="Rhea" id="RHEA-COMP:10670"/>
        <dbReference type="ChEBI" id="CHEBI:15378"/>
        <dbReference type="ChEBI" id="CHEBI:30616"/>
        <dbReference type="ChEBI" id="CHEBI:32551"/>
        <dbReference type="ChEBI" id="CHEBI:33019"/>
        <dbReference type="ChEBI" id="CHEBI:82748"/>
        <dbReference type="ChEBI" id="CHEBI:83665"/>
        <dbReference type="ChEBI" id="CHEBI:456215"/>
        <dbReference type="EC" id="6.3.4.19"/>
    </reaction>
</comment>
<comment type="subcellular location">
    <subcellularLocation>
        <location evidence="1">Cytoplasm</location>
    </subcellularLocation>
</comment>
<comment type="domain">
    <text>The N-terminal region contains the highly conserved SGGXDS motif, predicted to be a P-loop motif involved in ATP binding.</text>
</comment>
<comment type="similarity">
    <text evidence="1">Belongs to the tRNA(Ile)-lysidine synthase family.</text>
</comment>
<name>TILS_CLOD6</name>
<gene>
    <name evidence="1" type="primary">tilS</name>
    <name type="ordered locus">CD630_35600</name>
</gene>
<organism>
    <name type="scientific">Clostridioides difficile (strain 630)</name>
    <name type="common">Peptoclostridium difficile</name>
    <dbReference type="NCBI Taxonomy" id="272563"/>
    <lineage>
        <taxon>Bacteria</taxon>
        <taxon>Bacillati</taxon>
        <taxon>Bacillota</taxon>
        <taxon>Clostridia</taxon>
        <taxon>Peptostreptococcales</taxon>
        <taxon>Peptostreptococcaceae</taxon>
        <taxon>Clostridioides</taxon>
    </lineage>
</organism>
<proteinExistence type="inferred from homology"/>
<evidence type="ECO:0000255" key="1">
    <source>
        <dbReference type="HAMAP-Rule" id="MF_01161"/>
    </source>
</evidence>
<feature type="chain" id="PRO_1000065607" description="tRNA(Ile)-lysidine synthase">
    <location>
        <begin position="1"/>
        <end position="462"/>
    </location>
</feature>
<feature type="binding site" evidence="1">
    <location>
        <begin position="27"/>
        <end position="32"/>
    </location>
    <ligand>
        <name>ATP</name>
        <dbReference type="ChEBI" id="CHEBI:30616"/>
    </ligand>
</feature>